<evidence type="ECO:0000255" key="1">
    <source>
        <dbReference type="HAMAP-Rule" id="MF_00728"/>
    </source>
</evidence>
<feature type="chain" id="PRO_0000172889" description="Septation ring formation regulator EzrA">
    <location>
        <begin position="1"/>
        <end position="575"/>
    </location>
</feature>
<feature type="topological domain" description="Extracellular" evidence="1">
    <location>
        <begin position="1"/>
        <end position="8"/>
    </location>
</feature>
<feature type="transmembrane region" description="Helical" evidence="1">
    <location>
        <begin position="9"/>
        <end position="27"/>
    </location>
</feature>
<feature type="topological domain" description="Cytoplasmic" evidence="1">
    <location>
        <begin position="28"/>
        <end position="575"/>
    </location>
</feature>
<feature type="coiled-coil region" evidence="1">
    <location>
        <begin position="105"/>
        <end position="191"/>
    </location>
</feature>
<feature type="coiled-coil region" evidence="1">
    <location>
        <begin position="265"/>
        <end position="301"/>
    </location>
</feature>
<feature type="coiled-coil region" evidence="1">
    <location>
        <begin position="354"/>
        <end position="416"/>
    </location>
</feature>
<feature type="coiled-coil region" evidence="1">
    <location>
        <begin position="456"/>
        <end position="526"/>
    </location>
</feature>
<protein>
    <recommendedName>
        <fullName evidence="1">Septation ring formation regulator EzrA</fullName>
    </recommendedName>
</protein>
<accession>Q97RK0</accession>
<proteinExistence type="inferred from homology"/>
<reference key="1">
    <citation type="journal article" date="2001" name="Science">
        <title>Complete genome sequence of a virulent isolate of Streptococcus pneumoniae.</title>
        <authorList>
            <person name="Tettelin H."/>
            <person name="Nelson K.E."/>
            <person name="Paulsen I.T."/>
            <person name="Eisen J.A."/>
            <person name="Read T.D."/>
            <person name="Peterson S.N."/>
            <person name="Heidelberg J.F."/>
            <person name="DeBoy R.T."/>
            <person name="Haft D.H."/>
            <person name="Dodson R.J."/>
            <person name="Durkin A.S."/>
            <person name="Gwinn M.L."/>
            <person name="Kolonay J.F."/>
            <person name="Nelson W.C."/>
            <person name="Peterson J.D."/>
            <person name="Umayam L.A."/>
            <person name="White O."/>
            <person name="Salzberg S.L."/>
            <person name="Lewis M.R."/>
            <person name="Radune D."/>
            <person name="Holtzapple E.K."/>
            <person name="Khouri H.M."/>
            <person name="Wolf A.M."/>
            <person name="Utterback T.R."/>
            <person name="Hansen C.L."/>
            <person name="McDonald L.A."/>
            <person name="Feldblyum T.V."/>
            <person name="Angiuoli S.V."/>
            <person name="Dickinson T."/>
            <person name="Hickey E.K."/>
            <person name="Holt I.E."/>
            <person name="Loftus B.J."/>
            <person name="Yang F."/>
            <person name="Smith H.O."/>
            <person name="Venter J.C."/>
            <person name="Dougherty B.A."/>
            <person name="Morrison D.A."/>
            <person name="Hollingshead S.K."/>
            <person name="Fraser C.M."/>
        </authorList>
    </citation>
    <scope>NUCLEOTIDE SEQUENCE [LARGE SCALE GENOMIC DNA]</scope>
    <source>
        <strain>ATCC BAA-334 / TIGR4</strain>
    </source>
</reference>
<sequence>MSNGQLIYLMVAIAVILVLAYVVAIFLRKRNEGRLEALEEKKEELYNLPVNDEVEAVKNMHLIGQSQVAFREWNQKWVDLSLNSFADIENNLFEAEGYNHSFRFLKASHQIDQIESQITLIEEDIAAIRNALADLEKQESKNSGRVLHALDLFEELQHRVAENSEQYGQALDEIEKQLENIQSEFSQFVTLNSSGDPVEAAVILDNTENHILALSHIVDRVPALVTTLSTELPDQLQDLEAGYRKLIDANYHFVETDIEARFHLLYEAFKKNQENIRQLELDNAEYENGQAQEEINALYDIFTREIAAQKVVENLLATLPTYLQHMKENNTLLGEDIARLNKTYLLPETAASHVRRIQTELESFEAAIVEVTSNQEEPTQAYSVLEENLEDLQTQLKDIEDEQISVSERLTQIEKDDINARQKANVYVNRLHTIKRYMEKRNLPGIPQTFLKLFFTASNNTEDLMVELEQKMINIESVTRVLEIATNDMEALETETYNIVQYATLTEQLLQYSNRYRSFDERIQEAFNEALDIFEKEFDYHASFDKISQALEVAEPGVTNRFVTSYEKTRETIRF</sequence>
<comment type="function">
    <text evidence="1">Negative regulator of FtsZ ring formation; modulates the frequency and position of FtsZ ring formation. Inhibits FtsZ ring formation at polar sites. Interacts either with FtsZ or with one of its binding partners to promote depolymerization.</text>
</comment>
<comment type="subcellular location">
    <subcellularLocation>
        <location>Cell membrane</location>
        <topology>Single-pass membrane protein</topology>
    </subcellularLocation>
    <text evidence="1">Colocalized with FtsZ to the nascent septal site.</text>
</comment>
<comment type="similarity">
    <text evidence="1">Belongs to the EzrA family.</text>
</comment>
<dbReference type="EMBL" id="AE005672">
    <property type="protein sequence ID" value="AAK74944.1"/>
    <property type="molecule type" value="Genomic_DNA"/>
</dbReference>
<dbReference type="PIR" id="G95093">
    <property type="entry name" value="G95093"/>
</dbReference>
<dbReference type="RefSeq" id="WP_000064814.1">
    <property type="nucleotide sequence ID" value="NC_003028.3"/>
</dbReference>
<dbReference type="SMR" id="Q97RK0"/>
<dbReference type="PaxDb" id="170187-SP_0807"/>
<dbReference type="EnsemblBacteria" id="AAK74944">
    <property type="protein sequence ID" value="AAK74944"/>
    <property type="gene ID" value="SP_0807"/>
</dbReference>
<dbReference type="KEGG" id="spn:SP_0807"/>
<dbReference type="eggNOG" id="COG4477">
    <property type="taxonomic scope" value="Bacteria"/>
</dbReference>
<dbReference type="PhylomeDB" id="Q97RK0"/>
<dbReference type="BioCyc" id="SPNE170187:G1FZB-826-MONOMER"/>
<dbReference type="Proteomes" id="UP000000585">
    <property type="component" value="Chromosome"/>
</dbReference>
<dbReference type="GO" id="GO:0005886">
    <property type="term" value="C:plasma membrane"/>
    <property type="evidence" value="ECO:0007669"/>
    <property type="project" value="UniProtKB-SubCell"/>
</dbReference>
<dbReference type="GO" id="GO:0005940">
    <property type="term" value="C:septin ring"/>
    <property type="evidence" value="ECO:0007669"/>
    <property type="project" value="InterPro"/>
</dbReference>
<dbReference type="GO" id="GO:0000917">
    <property type="term" value="P:division septum assembly"/>
    <property type="evidence" value="ECO:0007669"/>
    <property type="project" value="UniProtKB-KW"/>
</dbReference>
<dbReference type="GO" id="GO:0000921">
    <property type="term" value="P:septin ring assembly"/>
    <property type="evidence" value="ECO:0007669"/>
    <property type="project" value="InterPro"/>
</dbReference>
<dbReference type="HAMAP" id="MF_00728">
    <property type="entry name" value="EzrA"/>
    <property type="match status" value="1"/>
</dbReference>
<dbReference type="InterPro" id="IPR010379">
    <property type="entry name" value="EzrA"/>
</dbReference>
<dbReference type="NCBIfam" id="NF003410">
    <property type="entry name" value="PRK04778.1-4"/>
    <property type="match status" value="1"/>
</dbReference>
<dbReference type="Pfam" id="PF06160">
    <property type="entry name" value="EzrA"/>
    <property type="match status" value="1"/>
</dbReference>
<keyword id="KW-0131">Cell cycle</keyword>
<keyword id="KW-0132">Cell division</keyword>
<keyword id="KW-1003">Cell membrane</keyword>
<keyword id="KW-0175">Coiled coil</keyword>
<keyword id="KW-0472">Membrane</keyword>
<keyword id="KW-1185">Reference proteome</keyword>
<keyword id="KW-0717">Septation</keyword>
<keyword id="KW-0812">Transmembrane</keyword>
<keyword id="KW-1133">Transmembrane helix</keyword>
<gene>
    <name evidence="1" type="primary">ezrA</name>
    <name type="ordered locus">SP_0807</name>
</gene>
<organism>
    <name type="scientific">Streptococcus pneumoniae serotype 4 (strain ATCC BAA-334 / TIGR4)</name>
    <dbReference type="NCBI Taxonomy" id="170187"/>
    <lineage>
        <taxon>Bacteria</taxon>
        <taxon>Bacillati</taxon>
        <taxon>Bacillota</taxon>
        <taxon>Bacilli</taxon>
        <taxon>Lactobacillales</taxon>
        <taxon>Streptococcaceae</taxon>
        <taxon>Streptococcus</taxon>
    </lineage>
</organism>
<name>EZRA_STRPN</name>